<dbReference type="EMBL" id="M17536">
    <property type="protein sequence ID" value="AAA27775.1"/>
    <property type="molecule type" value="mRNA"/>
</dbReference>
<dbReference type="EMBL" id="M17535">
    <property type="protein sequence ID" value="AAA27774.1"/>
    <property type="molecule type" value="mRNA"/>
</dbReference>
<dbReference type="RefSeq" id="XP_005096950.1">
    <molecule id="P12285-2"/>
    <property type="nucleotide sequence ID" value="XM_005096893.3"/>
</dbReference>
<dbReference type="EnsemblMetazoa" id="XM_005096893.3">
    <molecule id="P12285-2"/>
    <property type="protein sequence ID" value="XP_005096950.1"/>
    <property type="gene ID" value="LOC101859008"/>
</dbReference>
<dbReference type="GeneID" id="101859008"/>
<dbReference type="Proteomes" id="UP000694888">
    <property type="component" value="Unplaced"/>
</dbReference>
<dbReference type="GO" id="GO:0005576">
    <property type="term" value="C:extracellular region"/>
    <property type="evidence" value="ECO:0007669"/>
    <property type="project" value="UniProtKB-SubCell"/>
</dbReference>
<dbReference type="GO" id="GO:0007218">
    <property type="term" value="P:neuropeptide signaling pathway"/>
    <property type="evidence" value="ECO:0007669"/>
    <property type="project" value="UniProtKB-KW"/>
</dbReference>
<reference key="1">
    <citation type="journal article" date="1987" name="Cell">
        <title>Alternative splicing in individual Aplysia neurons generates neuropeptide diversity.</title>
        <authorList>
            <person name="Buck L.B."/>
            <person name="Bigelow J.M."/>
            <person name="Axel R."/>
        </authorList>
    </citation>
    <scope>NUCLEOTIDE SEQUENCE [MRNA]</scope>
    <scope>ALTERNATIVE SPLICING</scope>
</reference>
<reference key="2">
    <citation type="journal article" date="1989" name="Proc. Natl. Acad. Sci. U.S.A.">
        <title>Purification and sequencing of neuropeptides contained in neuron R15 of Aplysia californica.</title>
        <authorList>
            <person name="Weiss K.R."/>
            <person name="Bayley H."/>
            <person name="Lloyd P.E."/>
            <person name="Tenenbaum R."/>
            <person name="Kolks M.A.G."/>
            <person name="Buck L.B."/>
            <person name="Cropper E.C."/>
            <person name="Rosen S.C."/>
            <person name="Kupfermann I."/>
        </authorList>
    </citation>
    <scope>PARTIAL PROTEIN SEQUENCE</scope>
    <scope>DISULFIDE BOND</scope>
</reference>
<reference key="3">
    <citation type="journal article" date="1999" name="J. Neurochem.">
        <title>Formation of N-pyroglutamyl peptides from N-Glu and N-Gln precursors in Aplysia neurons.</title>
        <authorList>
            <person name="Garden R.W."/>
            <person name="Moroz T.P."/>
            <person name="Gleeson J.M."/>
            <person name="Floyd P.D."/>
            <person name="Li L."/>
            <person name="Rubakhin S.S."/>
            <person name="Sweedler J.V."/>
        </authorList>
    </citation>
    <scope>PYROGLUTAMATE FORMATION AT GLN-120</scope>
</reference>
<reference key="4">
    <citation type="journal article" date="2007" name="J. Neurophysiol.">
        <title>Autonomic control network active in Aplysia during locomotion includes neurons that express splice variants of R15-neuropeptides.</title>
        <authorList>
            <person name="Romanova E.V."/>
            <person name="McKay N."/>
            <person name="Weiss K.R."/>
            <person name="Sweedler J.V."/>
            <person name="Koester J."/>
        </authorList>
    </citation>
    <scope>TISSUE SPECIFICITY</scope>
    <scope>DISULFIDE BOND</scope>
    <scope>MASS SPECTROMETRY</scope>
</reference>
<comment type="function">
    <text>The alpha-1 peptide acts as an osmoregulatory peptide, increasing blood volume, and also modulates the activity of a set of cardiac motor neurons that control heart rate.</text>
</comment>
<comment type="subcellular location">
    <subcellularLocation>
        <location>Secreted</location>
    </subcellularLocation>
</comment>
<comment type="alternative products">
    <event type="alternative splicing"/>
    <isoform>
        <id>P12285-1</id>
        <name>R15-2</name>
        <sequence type="displayed"/>
    </isoform>
    <isoform>
        <id>P12285-2</id>
        <name>R15-1</name>
        <sequence type="described" ref="VSP_029222"/>
    </isoform>
    <text>A number of isoforms are produced.</text>
</comment>
<comment type="tissue specificity">
    <text evidence="2">Expressed within the abdominal ganglion in neurons R15, RB(HE), the two L9(G) gill motoneurons, and L40 interneuron, all are parts of autonomic control circuit that contributes to implementing a central command to coordinate autonomic activity with escape locomotion.</text>
</comment>
<comment type="mass spectrometry" mass="3996.6" error="0.1" method="MALDI" evidence="2">
    <molecule>R15 alpha-1 peptide</molecule>
    <text>R15 alpha-1.</text>
</comment>
<comment type="mass spectrometry" mass="2582.4" error="0.3" method="MALDI" evidence="2">
    <molecule>R15 alpha-1 peptide</molecule>
    <text>R15 alpha-2.</text>
</comment>
<comment type="mass spectrometry" mass="2859.2" error="0.1" method="MALDI" evidence="2">
    <molecule>R15 beta peptide</molecule>
</comment>
<comment type="mass spectrometry" mass="1833.0" method="MALDI" evidence="2">
    <molecule>R15 beta-f peptide</molecule>
</comment>
<comment type="mass spectrometry" mass="4497.0" error="0.1" method="MALDI" evidence="2">
    <molecule>R15 gamma peptide</molecule>
</comment>
<comment type="miscellaneous">
    <text>Isoform R15-1 produces peptide R15 alpha-2 which is a 24 aa long spliced form of peptide R15 alpha-1 which is produced by isoform R15-2.</text>
</comment>
<protein>
    <recommendedName>
        <fullName>Neuroactive polyprotein R15</fullName>
    </recommendedName>
    <component>
        <recommendedName>
            <fullName>R15 alpha-1 peptide</fullName>
        </recommendedName>
    </component>
    <component>
        <recommendedName>
            <fullName>R15 beta peptide</fullName>
        </recommendedName>
    </component>
    <component>
        <recommendedName>
            <fullName>R15 beta-f peptide</fullName>
        </recommendedName>
    </component>
    <component>
        <recommendedName>
            <fullName>R15 gamma peptide</fullName>
        </recommendedName>
    </component>
</protein>
<evidence type="ECO:0000255" key="1"/>
<evidence type="ECO:0000269" key="2">
    <source>
    </source>
</evidence>
<evidence type="ECO:0000269" key="3">
    <source>
    </source>
</evidence>
<evidence type="ECO:0000269" key="4">
    <source>
    </source>
</evidence>
<evidence type="ECO:0000305" key="5"/>
<sequence length="156" mass="17321">MDSAGLHINFRLSHVLTVVTCILYILPPTTTAYSLPAPGKAAFQHQLSKRDVSDGSAERRPYTRMGSGGLKLHCQVHPANCPGGLMVTKKSDLLGALLSRNSPSSYGLPSRDMSTAYKRQDVRQQLRMFDDLVQLRKLIETPSVYPSEEDEARLYD</sequence>
<name>AGR15_APLCA</name>
<organism>
    <name type="scientific">Aplysia californica</name>
    <name type="common">California sea hare</name>
    <dbReference type="NCBI Taxonomy" id="6500"/>
    <lineage>
        <taxon>Eukaryota</taxon>
        <taxon>Metazoa</taxon>
        <taxon>Spiralia</taxon>
        <taxon>Lophotrochozoa</taxon>
        <taxon>Mollusca</taxon>
        <taxon>Gastropoda</taxon>
        <taxon>Heterobranchia</taxon>
        <taxon>Euthyneura</taxon>
        <taxon>Tectipleura</taxon>
        <taxon>Aplysiida</taxon>
        <taxon>Aplysioidea</taxon>
        <taxon>Aplysiidae</taxon>
        <taxon>Aplysia</taxon>
    </lineage>
</organism>
<accession>P12285</accession>
<accession>P12284</accession>
<feature type="signal peptide" evidence="1">
    <location>
        <begin position="1"/>
        <end position="26"/>
    </location>
</feature>
<feature type="propeptide" id="PRO_0000001796" evidence="1">
    <location>
        <begin position="27"/>
        <end position="48"/>
    </location>
</feature>
<feature type="peptide" id="PRO_0000001797" description="R15 alpha-1 peptide">
    <location>
        <begin position="51"/>
        <end position="88"/>
    </location>
</feature>
<feature type="peptide" id="PRO_0000001798" description="R15 beta peptide">
    <location>
        <begin position="90"/>
        <end position="117"/>
    </location>
</feature>
<feature type="peptide" id="PRO_0000309495" description="R15 beta-f peptide">
    <location>
        <begin position="100"/>
        <end position="117"/>
    </location>
</feature>
<feature type="peptide" id="PRO_0000001799" description="R15 gamma peptide">
    <location>
        <begin position="120"/>
        <end position="156"/>
    </location>
</feature>
<feature type="modified residue" description="Pyrrolidone carboxylic acid" evidence="4">
    <location>
        <position position="120"/>
    </location>
</feature>
<feature type="disulfide bond" evidence="2 3">
    <location>
        <begin position="74"/>
        <end position="81"/>
    </location>
</feature>
<feature type="splice variant" id="VSP_029222" description="In isoform R15-1." evidence="5">
    <original>SDGSAERRPYTRMGSG</original>
    <variation>YM</variation>
    <location>
        <begin position="53"/>
        <end position="68"/>
    </location>
</feature>
<proteinExistence type="evidence at protein level"/>
<keyword id="KW-0025">Alternative splicing</keyword>
<keyword id="KW-0165">Cleavage on pair of basic residues</keyword>
<keyword id="KW-0903">Direct protein sequencing</keyword>
<keyword id="KW-1015">Disulfide bond</keyword>
<keyword id="KW-0527">Neuropeptide</keyword>
<keyword id="KW-0873">Pyrrolidone carboxylic acid</keyword>
<keyword id="KW-0964">Secreted</keyword>
<keyword id="KW-0732">Signal</keyword>